<organism>
    <name type="scientific">Homo sapiens</name>
    <name type="common">Human</name>
    <dbReference type="NCBI Taxonomy" id="9606"/>
    <lineage>
        <taxon>Eukaryota</taxon>
        <taxon>Metazoa</taxon>
        <taxon>Chordata</taxon>
        <taxon>Craniata</taxon>
        <taxon>Vertebrata</taxon>
        <taxon>Euteleostomi</taxon>
        <taxon>Mammalia</taxon>
        <taxon>Eutheria</taxon>
        <taxon>Euarchontoglires</taxon>
        <taxon>Primates</taxon>
        <taxon>Haplorrhini</taxon>
        <taxon>Catarrhini</taxon>
        <taxon>Hominidae</taxon>
        <taxon>Homo</taxon>
    </lineage>
</organism>
<feature type="chain" id="PRO_0000288809" description="Centrosomal protein of 89 kDa">
    <location>
        <begin position="1"/>
        <end position="783"/>
    </location>
</feature>
<feature type="region of interest" description="Disordered" evidence="2">
    <location>
        <begin position="28"/>
        <end position="49"/>
    </location>
</feature>
<feature type="region of interest" description="Disordered" evidence="2">
    <location>
        <begin position="63"/>
        <end position="157"/>
    </location>
</feature>
<feature type="region of interest" description="Disordered" evidence="2">
    <location>
        <begin position="176"/>
        <end position="226"/>
    </location>
</feature>
<feature type="coiled-coil region" evidence="1">
    <location>
        <begin position="234"/>
        <end position="333"/>
    </location>
</feature>
<feature type="coiled-coil region" evidence="1">
    <location>
        <begin position="369"/>
        <end position="719"/>
    </location>
</feature>
<feature type="compositionally biased region" description="Pro residues" evidence="2">
    <location>
        <begin position="34"/>
        <end position="45"/>
    </location>
</feature>
<feature type="compositionally biased region" description="Polar residues" evidence="2">
    <location>
        <begin position="94"/>
        <end position="107"/>
    </location>
</feature>
<feature type="compositionally biased region" description="Basic and acidic residues" evidence="2">
    <location>
        <begin position="139"/>
        <end position="155"/>
    </location>
</feature>
<feature type="compositionally biased region" description="Basic and acidic residues" evidence="2">
    <location>
        <begin position="196"/>
        <end position="214"/>
    </location>
</feature>
<feature type="modified residue" description="Phosphoserine" evidence="10">
    <location>
        <position position="50"/>
    </location>
</feature>
<feature type="splice variant" id="VSP_039181" description="In isoform 2." evidence="8">
    <location>
        <begin position="1"/>
        <end position="247"/>
    </location>
</feature>
<feature type="splice variant" id="VSP_039182" description="In isoform 3." evidence="9">
    <original>SLNIEGLPSKGPI</original>
    <variation>VTFPIVKISFSDF</variation>
    <location>
        <begin position="344"/>
        <end position="356"/>
    </location>
</feature>
<feature type="splice variant" id="VSP_039183" description="In isoform 3." evidence="9">
    <location>
        <begin position="357"/>
        <end position="782"/>
    </location>
</feature>
<feature type="sequence variant" id="VAR_063122" description="In dbSNP:rs3764633.">
    <original>R</original>
    <variation>W</variation>
    <location>
        <position position="194"/>
    </location>
</feature>
<feature type="sequence variant" id="VAR_063123" description="In dbSNP:rs4805825." evidence="4 5">
    <original>V</original>
    <variation>A</variation>
    <location>
        <position position="398"/>
    </location>
</feature>
<accession>Q96ST8</accession>
<accession>B9EGA6</accession>
<accession>Q8N5J8</accession>
<evidence type="ECO:0000255" key="1"/>
<evidence type="ECO:0000256" key="2">
    <source>
        <dbReference type="SAM" id="MobiDB-lite"/>
    </source>
</evidence>
<evidence type="ECO:0000269" key="3">
    <source>
    </source>
</evidence>
<evidence type="ECO:0000269" key="4">
    <source>
    </source>
</evidence>
<evidence type="ECO:0000269" key="5">
    <source>
    </source>
</evidence>
<evidence type="ECO:0000269" key="6">
    <source>
    </source>
</evidence>
<evidence type="ECO:0000269" key="7">
    <source>
    </source>
</evidence>
<evidence type="ECO:0000303" key="8">
    <source>
    </source>
</evidence>
<evidence type="ECO:0000303" key="9">
    <source>
    </source>
</evidence>
<evidence type="ECO:0007744" key="10">
    <source>
    </source>
</evidence>
<reference key="1">
    <citation type="journal article" date="2004" name="Nat. Genet.">
        <title>Complete sequencing and characterization of 21,243 full-length human cDNAs.</title>
        <authorList>
            <person name="Ota T."/>
            <person name="Suzuki Y."/>
            <person name="Nishikawa T."/>
            <person name="Otsuki T."/>
            <person name="Sugiyama T."/>
            <person name="Irie R."/>
            <person name="Wakamatsu A."/>
            <person name="Hayashi K."/>
            <person name="Sato H."/>
            <person name="Nagai K."/>
            <person name="Kimura K."/>
            <person name="Makita H."/>
            <person name="Sekine M."/>
            <person name="Obayashi M."/>
            <person name="Nishi T."/>
            <person name="Shibahara T."/>
            <person name="Tanaka T."/>
            <person name="Ishii S."/>
            <person name="Yamamoto J."/>
            <person name="Saito K."/>
            <person name="Kawai Y."/>
            <person name="Isono Y."/>
            <person name="Nakamura Y."/>
            <person name="Nagahari K."/>
            <person name="Murakami K."/>
            <person name="Yasuda T."/>
            <person name="Iwayanagi T."/>
            <person name="Wagatsuma M."/>
            <person name="Shiratori A."/>
            <person name="Sudo H."/>
            <person name="Hosoiri T."/>
            <person name="Kaku Y."/>
            <person name="Kodaira H."/>
            <person name="Kondo H."/>
            <person name="Sugawara M."/>
            <person name="Takahashi M."/>
            <person name="Kanda K."/>
            <person name="Yokoi T."/>
            <person name="Furuya T."/>
            <person name="Kikkawa E."/>
            <person name="Omura Y."/>
            <person name="Abe K."/>
            <person name="Kamihara K."/>
            <person name="Katsuta N."/>
            <person name="Sato K."/>
            <person name="Tanikawa M."/>
            <person name="Yamazaki M."/>
            <person name="Ninomiya K."/>
            <person name="Ishibashi T."/>
            <person name="Yamashita H."/>
            <person name="Murakawa K."/>
            <person name="Fujimori K."/>
            <person name="Tanai H."/>
            <person name="Kimata M."/>
            <person name="Watanabe M."/>
            <person name="Hiraoka S."/>
            <person name="Chiba Y."/>
            <person name="Ishida S."/>
            <person name="Ono Y."/>
            <person name="Takiguchi S."/>
            <person name="Watanabe S."/>
            <person name="Yosida M."/>
            <person name="Hotuta T."/>
            <person name="Kusano J."/>
            <person name="Kanehori K."/>
            <person name="Takahashi-Fujii A."/>
            <person name="Hara H."/>
            <person name="Tanase T.-O."/>
            <person name="Nomura Y."/>
            <person name="Togiya S."/>
            <person name="Komai F."/>
            <person name="Hara R."/>
            <person name="Takeuchi K."/>
            <person name="Arita M."/>
            <person name="Imose N."/>
            <person name="Musashino K."/>
            <person name="Yuuki H."/>
            <person name="Oshima A."/>
            <person name="Sasaki N."/>
            <person name="Aotsuka S."/>
            <person name="Yoshikawa Y."/>
            <person name="Matsunawa H."/>
            <person name="Ichihara T."/>
            <person name="Shiohata N."/>
            <person name="Sano S."/>
            <person name="Moriya S."/>
            <person name="Momiyama H."/>
            <person name="Satoh N."/>
            <person name="Takami S."/>
            <person name="Terashima Y."/>
            <person name="Suzuki O."/>
            <person name="Nakagawa S."/>
            <person name="Senoh A."/>
            <person name="Mizoguchi H."/>
            <person name="Goto Y."/>
            <person name="Shimizu F."/>
            <person name="Wakebe H."/>
            <person name="Hishigaki H."/>
            <person name="Watanabe T."/>
            <person name="Sugiyama A."/>
            <person name="Takemoto M."/>
            <person name="Kawakami B."/>
            <person name="Yamazaki M."/>
            <person name="Watanabe K."/>
            <person name="Kumagai A."/>
            <person name="Itakura S."/>
            <person name="Fukuzumi Y."/>
            <person name="Fujimori Y."/>
            <person name="Komiyama M."/>
            <person name="Tashiro H."/>
            <person name="Tanigami A."/>
            <person name="Fujiwara T."/>
            <person name="Ono T."/>
            <person name="Yamada K."/>
            <person name="Fujii Y."/>
            <person name="Ozaki K."/>
            <person name="Hirao M."/>
            <person name="Ohmori Y."/>
            <person name="Kawabata A."/>
            <person name="Hikiji T."/>
            <person name="Kobatake N."/>
            <person name="Inagaki H."/>
            <person name="Ikema Y."/>
            <person name="Okamoto S."/>
            <person name="Okitani R."/>
            <person name="Kawakami T."/>
            <person name="Noguchi S."/>
            <person name="Itoh T."/>
            <person name="Shigeta K."/>
            <person name="Senba T."/>
            <person name="Matsumura K."/>
            <person name="Nakajima Y."/>
            <person name="Mizuno T."/>
            <person name="Morinaga M."/>
            <person name="Sasaki M."/>
            <person name="Togashi T."/>
            <person name="Oyama M."/>
            <person name="Hata H."/>
            <person name="Watanabe M."/>
            <person name="Komatsu T."/>
            <person name="Mizushima-Sugano J."/>
            <person name="Satoh T."/>
            <person name="Shirai Y."/>
            <person name="Takahashi Y."/>
            <person name="Nakagawa K."/>
            <person name="Okumura K."/>
            <person name="Nagase T."/>
            <person name="Nomura N."/>
            <person name="Kikuchi H."/>
            <person name="Masuho Y."/>
            <person name="Yamashita R."/>
            <person name="Nakai K."/>
            <person name="Yada T."/>
            <person name="Nakamura Y."/>
            <person name="Ohara O."/>
            <person name="Isogai T."/>
            <person name="Sugano S."/>
        </authorList>
    </citation>
    <scope>NUCLEOTIDE SEQUENCE [LARGE SCALE MRNA] (ISOFORM 2)</scope>
    <scope>VARIANT ALA-398</scope>
</reference>
<reference key="2">
    <citation type="journal article" date="2004" name="Nature">
        <title>The DNA sequence and biology of human chromosome 19.</title>
        <authorList>
            <person name="Grimwood J."/>
            <person name="Gordon L.A."/>
            <person name="Olsen A.S."/>
            <person name="Terry A."/>
            <person name="Schmutz J."/>
            <person name="Lamerdin J.E."/>
            <person name="Hellsten U."/>
            <person name="Goodstein D."/>
            <person name="Couronne O."/>
            <person name="Tran-Gyamfi M."/>
            <person name="Aerts A."/>
            <person name="Altherr M."/>
            <person name="Ashworth L."/>
            <person name="Bajorek E."/>
            <person name="Black S."/>
            <person name="Branscomb E."/>
            <person name="Caenepeel S."/>
            <person name="Carrano A.V."/>
            <person name="Caoile C."/>
            <person name="Chan Y.M."/>
            <person name="Christensen M."/>
            <person name="Cleland C.A."/>
            <person name="Copeland A."/>
            <person name="Dalin E."/>
            <person name="Dehal P."/>
            <person name="Denys M."/>
            <person name="Detter J.C."/>
            <person name="Escobar J."/>
            <person name="Flowers D."/>
            <person name="Fotopulos D."/>
            <person name="Garcia C."/>
            <person name="Georgescu A.M."/>
            <person name="Glavina T."/>
            <person name="Gomez M."/>
            <person name="Gonzales E."/>
            <person name="Groza M."/>
            <person name="Hammon N."/>
            <person name="Hawkins T."/>
            <person name="Haydu L."/>
            <person name="Ho I."/>
            <person name="Huang W."/>
            <person name="Israni S."/>
            <person name="Jett J."/>
            <person name="Kadner K."/>
            <person name="Kimball H."/>
            <person name="Kobayashi A."/>
            <person name="Larionov V."/>
            <person name="Leem S.-H."/>
            <person name="Lopez F."/>
            <person name="Lou Y."/>
            <person name="Lowry S."/>
            <person name="Malfatti S."/>
            <person name="Martinez D."/>
            <person name="McCready P.M."/>
            <person name="Medina C."/>
            <person name="Morgan J."/>
            <person name="Nelson K."/>
            <person name="Nolan M."/>
            <person name="Ovcharenko I."/>
            <person name="Pitluck S."/>
            <person name="Pollard M."/>
            <person name="Popkie A.P."/>
            <person name="Predki P."/>
            <person name="Quan G."/>
            <person name="Ramirez L."/>
            <person name="Rash S."/>
            <person name="Retterer J."/>
            <person name="Rodriguez A."/>
            <person name="Rogers S."/>
            <person name="Salamov A."/>
            <person name="Salazar A."/>
            <person name="She X."/>
            <person name="Smith D."/>
            <person name="Slezak T."/>
            <person name="Solovyev V."/>
            <person name="Thayer N."/>
            <person name="Tice H."/>
            <person name="Tsai M."/>
            <person name="Ustaszewska A."/>
            <person name="Vo N."/>
            <person name="Wagner M."/>
            <person name="Wheeler J."/>
            <person name="Wu K."/>
            <person name="Xie G."/>
            <person name="Yang J."/>
            <person name="Dubchak I."/>
            <person name="Furey T.S."/>
            <person name="DeJong P."/>
            <person name="Dickson M."/>
            <person name="Gordon D."/>
            <person name="Eichler E.E."/>
            <person name="Pennacchio L.A."/>
            <person name="Richardson P."/>
            <person name="Stubbs L."/>
            <person name="Rokhsar D.S."/>
            <person name="Myers R.M."/>
            <person name="Rubin E.M."/>
            <person name="Lucas S.M."/>
        </authorList>
    </citation>
    <scope>NUCLEOTIDE SEQUENCE [LARGE SCALE GENOMIC DNA]</scope>
</reference>
<reference key="3">
    <citation type="journal article" date="2004" name="Genome Res.">
        <title>The status, quality, and expansion of the NIH full-length cDNA project: the Mammalian Gene Collection (MGC).</title>
        <authorList>
            <consortium name="The MGC Project Team"/>
        </authorList>
    </citation>
    <scope>NUCLEOTIDE SEQUENCE [LARGE SCALE MRNA] (ISOFORMS 1 AND 3)</scope>
    <scope>VARIANT ALA-398</scope>
    <source>
        <tissue>Brain</tissue>
        <tissue>Colon</tissue>
    </source>
</reference>
<reference key="4">
    <citation type="journal article" date="2003" name="Nature">
        <title>Proteomic characterization of the human centrosome by protein correlation profiling.</title>
        <authorList>
            <person name="Andersen J.S."/>
            <person name="Wilkinson C.J."/>
            <person name="Mayor T."/>
            <person name="Mortensen P."/>
            <person name="Nigg E.A."/>
            <person name="Mann M."/>
        </authorList>
    </citation>
    <scope>IDENTIFICATION BY MASS SPECTROMETRY</scope>
    <scope>SUBCELLULAR LOCATION [LARGE SCALE ANALYSIS]</scope>
    <source>
        <tissue>Lymphoblast</tissue>
    </source>
</reference>
<reference key="5">
    <citation type="journal article" date="2009" name="Sci. Signal.">
        <title>Quantitative phosphoproteomic analysis of T cell receptor signaling reveals system-wide modulation of protein-protein interactions.</title>
        <authorList>
            <person name="Mayya V."/>
            <person name="Lundgren D.H."/>
            <person name="Hwang S.-I."/>
            <person name="Rezaul K."/>
            <person name="Wu L."/>
            <person name="Eng J.K."/>
            <person name="Rodionov V."/>
            <person name="Han D.K."/>
        </authorList>
    </citation>
    <scope>PHOSPHORYLATION [LARGE SCALE ANALYSIS] AT SER-50</scope>
    <scope>IDENTIFICATION BY MASS SPECTROMETRY [LARGE SCALE ANALYSIS]</scope>
    <source>
        <tissue>Leukemic T-cell</tissue>
    </source>
</reference>
<reference key="6">
    <citation type="journal article" date="2011" name="Cytoskeleton">
        <title>Assessing the localization of centrosomal proteins by PALM/STORM nanoscopy.</title>
        <authorList>
            <person name="Sillibourne J.E."/>
            <person name="Specht C.G."/>
            <person name="Izeddin I."/>
            <person name="Hurbain I."/>
            <person name="Tran P."/>
            <person name="Triller A."/>
            <person name="Darzacq X."/>
            <person name="Dahan M."/>
            <person name="Bornens M."/>
        </authorList>
    </citation>
    <scope>SUBCELLULAR LOCATION</scope>
</reference>
<reference key="7">
    <citation type="journal article" date="2011" name="EMBO J.">
        <title>Novel asymmetrically localizing components of human centrosomes identified by complementary proteomics methods.</title>
        <authorList>
            <person name="Jakobsen L."/>
            <person name="Vanselow K."/>
            <person name="Skogs M."/>
            <person name="Toyoda Y."/>
            <person name="Lundberg E."/>
            <person name="Poser I."/>
            <person name="Falkenby L.G."/>
            <person name="Bennetzen M."/>
            <person name="Westendorf J."/>
            <person name="Nigg E.A."/>
            <person name="Uhlen M."/>
            <person name="Hyman A.A."/>
            <person name="Andersen J.S."/>
        </authorList>
    </citation>
    <scope>IDENTIFICATION BY MASS SPECTROMETRY</scope>
    <scope>SUBCELLULAR LOCATION</scope>
</reference>
<reference key="8">
    <citation type="journal article" date="2013" name="Genes Dev.">
        <title>Centriole distal appendages promote membrane docking, leading to cilia initiation.</title>
        <authorList>
            <person name="Tanos B.E."/>
            <person name="Yang H.J."/>
            <person name="Soni R."/>
            <person name="Wang W.J."/>
            <person name="Macaluso F.P."/>
            <person name="Asara J.M."/>
            <person name="Tsou M.F."/>
        </authorList>
    </citation>
    <scope>FUNCTION</scope>
    <scope>SUBCELLULAR LOCATION</scope>
</reference>
<reference key="9">
    <citation type="journal article" date="2013" name="Hum. Mol. Genet.">
        <title>CEP89 is required for mitochondrial metabolism and neuronal function in man and fly.</title>
        <authorList>
            <person name="van Bon B.W."/>
            <person name="Oortveld M.A."/>
            <person name="Nijtmans L.G."/>
            <person name="Fenckova M."/>
            <person name="Nijhof B."/>
            <person name="Besseling J."/>
            <person name="Vos M."/>
            <person name="Kramer J.M."/>
            <person name="de Leeuw N."/>
            <person name="Castells-Nobau A."/>
            <person name="Asztalos L."/>
            <person name="Viragh E."/>
            <person name="Ruiter M."/>
            <person name="Hofmann F."/>
            <person name="Eshuis L."/>
            <person name="Collavin L."/>
            <person name="Huynen M.A."/>
            <person name="Asztalos Z."/>
            <person name="Verstreken P."/>
            <person name="Rodenburg R.J."/>
            <person name="Smeitink J.A."/>
            <person name="de Vries B.B."/>
            <person name="Schenck A."/>
        </authorList>
    </citation>
    <scope>FUNCTION</scope>
    <scope>SUBCELLULAR LOCATION</scope>
    <scope>DISEASE</scope>
</reference>
<protein>
    <recommendedName>
        <fullName>Centrosomal protein of 89 kDa</fullName>
        <shortName>Cep89</shortName>
    </recommendedName>
    <alternativeName>
        <fullName>Centrosomal protein 123</fullName>
        <shortName>Cep123</shortName>
    </alternativeName>
    <alternativeName>
        <fullName>Coiled-coil domain-containing protein 123</fullName>
    </alternativeName>
</protein>
<name>CEP89_HUMAN</name>
<keyword id="KW-0025">Alternative splicing</keyword>
<keyword id="KW-0970">Cilium biogenesis/degradation</keyword>
<keyword id="KW-0175">Coiled coil</keyword>
<keyword id="KW-0963">Cytoplasm</keyword>
<keyword id="KW-0206">Cytoskeleton</keyword>
<keyword id="KW-0496">Mitochondrion</keyword>
<keyword id="KW-0597">Phosphoprotein</keyword>
<keyword id="KW-1267">Proteomics identification</keyword>
<keyword id="KW-1185">Reference proteome</keyword>
<dbReference type="EMBL" id="AK027546">
    <property type="protein sequence ID" value="BAB55190.1"/>
    <property type="molecule type" value="mRNA"/>
</dbReference>
<dbReference type="EMBL" id="AC008805">
    <property type="status" value="NOT_ANNOTATED_CDS"/>
    <property type="molecule type" value="Genomic_DNA"/>
</dbReference>
<dbReference type="EMBL" id="AC119048">
    <property type="status" value="NOT_ANNOTATED_CDS"/>
    <property type="molecule type" value="Genomic_DNA"/>
</dbReference>
<dbReference type="EMBL" id="AC011449">
    <property type="status" value="NOT_ANNOTATED_CDS"/>
    <property type="molecule type" value="Genomic_DNA"/>
</dbReference>
<dbReference type="EMBL" id="BC032307">
    <property type="protein sequence ID" value="AAH32307.1"/>
    <property type="molecule type" value="mRNA"/>
</dbReference>
<dbReference type="EMBL" id="BC136328">
    <property type="protein sequence ID" value="AAI36329.1"/>
    <property type="molecule type" value="mRNA"/>
</dbReference>
<dbReference type="CCDS" id="CCDS32987.1">
    <molecule id="Q96ST8-1"/>
</dbReference>
<dbReference type="RefSeq" id="NP_116205.3">
    <molecule id="Q96ST8-1"/>
    <property type="nucleotide sequence ID" value="NM_032816.4"/>
</dbReference>
<dbReference type="RefSeq" id="XP_011525727.1">
    <property type="nucleotide sequence ID" value="XM_011527425.2"/>
</dbReference>
<dbReference type="RefSeq" id="XP_047295518.1">
    <molecule id="Q96ST8-2"/>
    <property type="nucleotide sequence ID" value="XM_047439562.1"/>
</dbReference>
<dbReference type="SMR" id="Q96ST8"/>
<dbReference type="BioGRID" id="124342">
    <property type="interactions" value="146"/>
</dbReference>
<dbReference type="CORUM" id="Q96ST8"/>
<dbReference type="DIP" id="DIP-47325N"/>
<dbReference type="FunCoup" id="Q96ST8">
    <property type="interactions" value="1064"/>
</dbReference>
<dbReference type="IntAct" id="Q96ST8">
    <property type="interactions" value="113"/>
</dbReference>
<dbReference type="MINT" id="Q96ST8"/>
<dbReference type="STRING" id="9606.ENSP00000306105"/>
<dbReference type="iPTMnet" id="Q96ST8"/>
<dbReference type="PhosphoSitePlus" id="Q96ST8"/>
<dbReference type="BioMuta" id="CEP89"/>
<dbReference type="DMDM" id="296439414"/>
<dbReference type="jPOST" id="Q96ST8"/>
<dbReference type="MassIVE" id="Q96ST8"/>
<dbReference type="PaxDb" id="9606-ENSP00000306105"/>
<dbReference type="PeptideAtlas" id="Q96ST8"/>
<dbReference type="ProteomicsDB" id="78147">
    <molecule id="Q96ST8-1"/>
</dbReference>
<dbReference type="ProteomicsDB" id="78148">
    <molecule id="Q96ST8-2"/>
</dbReference>
<dbReference type="ProteomicsDB" id="78149">
    <molecule id="Q96ST8-3"/>
</dbReference>
<dbReference type="Antibodypedia" id="47945">
    <property type="antibodies" value="116 antibodies from 16 providers"/>
</dbReference>
<dbReference type="DNASU" id="84902"/>
<dbReference type="Ensembl" id="ENST00000305768.10">
    <molecule id="Q96ST8-1"/>
    <property type="protein sequence ID" value="ENSP00000306105.4"/>
    <property type="gene ID" value="ENSG00000121289.18"/>
</dbReference>
<dbReference type="GeneID" id="84902"/>
<dbReference type="KEGG" id="hsa:84902"/>
<dbReference type="MANE-Select" id="ENST00000305768.10">
    <property type="protein sequence ID" value="ENSP00000306105.4"/>
    <property type="RefSeq nucleotide sequence ID" value="NM_032816.5"/>
    <property type="RefSeq protein sequence ID" value="NP_116205.3"/>
</dbReference>
<dbReference type="UCSC" id="uc002nty.4">
    <molecule id="Q96ST8-1"/>
    <property type="organism name" value="human"/>
</dbReference>
<dbReference type="AGR" id="HGNC:25907"/>
<dbReference type="CTD" id="84902"/>
<dbReference type="DisGeNET" id="84902"/>
<dbReference type="GeneCards" id="CEP89"/>
<dbReference type="HGNC" id="HGNC:25907">
    <property type="gene designation" value="CEP89"/>
</dbReference>
<dbReference type="HPA" id="ENSG00000121289">
    <property type="expression patterns" value="Low tissue specificity"/>
</dbReference>
<dbReference type="MalaCards" id="CEP89"/>
<dbReference type="MIM" id="615470">
    <property type="type" value="gene"/>
</dbReference>
<dbReference type="neXtProt" id="NX_Q96ST8"/>
<dbReference type="OpenTargets" id="ENSG00000121289"/>
<dbReference type="PharmGKB" id="PA147358250"/>
<dbReference type="VEuPathDB" id="HostDB:ENSG00000121289"/>
<dbReference type="eggNOG" id="ENOG502QWK8">
    <property type="taxonomic scope" value="Eukaryota"/>
</dbReference>
<dbReference type="GeneTree" id="ENSGT00390000018876"/>
<dbReference type="HOGENOM" id="CLU_023281_0_0_1"/>
<dbReference type="InParanoid" id="Q96ST8"/>
<dbReference type="OMA" id="ENQQMRE"/>
<dbReference type="OrthoDB" id="6622877at2759"/>
<dbReference type="PAN-GO" id="Q96ST8">
    <property type="GO annotations" value="4 GO annotations based on evolutionary models"/>
</dbReference>
<dbReference type="PhylomeDB" id="Q96ST8"/>
<dbReference type="TreeFam" id="TF329234"/>
<dbReference type="PathwayCommons" id="Q96ST8"/>
<dbReference type="Reactome" id="R-HSA-5620912">
    <property type="pathway name" value="Anchoring of the basal body to the plasma membrane"/>
</dbReference>
<dbReference type="SignaLink" id="Q96ST8"/>
<dbReference type="BioGRID-ORCS" id="84902">
    <property type="hits" value="13 hits in 1158 CRISPR screens"/>
</dbReference>
<dbReference type="CD-CODE" id="8C2F96ED">
    <property type="entry name" value="Centrosome"/>
</dbReference>
<dbReference type="ChiTaRS" id="CEP89">
    <property type="organism name" value="human"/>
</dbReference>
<dbReference type="GenomeRNAi" id="84902"/>
<dbReference type="Pharos" id="Q96ST8">
    <property type="development level" value="Tbio"/>
</dbReference>
<dbReference type="PRO" id="PR:Q96ST8"/>
<dbReference type="Proteomes" id="UP000005640">
    <property type="component" value="Chromosome 19"/>
</dbReference>
<dbReference type="RNAct" id="Q96ST8">
    <property type="molecule type" value="protein"/>
</dbReference>
<dbReference type="Bgee" id="ENSG00000121289">
    <property type="expression patterns" value="Expressed in cortical plate and 148 other cell types or tissues"/>
</dbReference>
<dbReference type="ExpressionAtlas" id="Q96ST8">
    <property type="expression patterns" value="baseline and differential"/>
</dbReference>
<dbReference type="GO" id="GO:0005814">
    <property type="term" value="C:centriole"/>
    <property type="evidence" value="ECO:0000314"/>
    <property type="project" value="UniProtKB"/>
</dbReference>
<dbReference type="GO" id="GO:0005813">
    <property type="term" value="C:centrosome"/>
    <property type="evidence" value="ECO:0000314"/>
    <property type="project" value="HPA"/>
</dbReference>
<dbReference type="GO" id="GO:0036064">
    <property type="term" value="C:ciliary basal body"/>
    <property type="evidence" value="ECO:0000314"/>
    <property type="project" value="HPA"/>
</dbReference>
<dbReference type="GO" id="GO:0097539">
    <property type="term" value="C:ciliary transition fiber"/>
    <property type="evidence" value="ECO:0000314"/>
    <property type="project" value="MGI"/>
</dbReference>
<dbReference type="GO" id="GO:0005929">
    <property type="term" value="C:cilium"/>
    <property type="evidence" value="ECO:0000314"/>
    <property type="project" value="HPA"/>
</dbReference>
<dbReference type="GO" id="GO:0005829">
    <property type="term" value="C:cytosol"/>
    <property type="evidence" value="ECO:0000314"/>
    <property type="project" value="HPA"/>
</dbReference>
<dbReference type="GO" id="GO:0005758">
    <property type="term" value="C:mitochondrial intermembrane space"/>
    <property type="evidence" value="ECO:0000314"/>
    <property type="project" value="FlyBase"/>
</dbReference>
<dbReference type="GO" id="GO:0031514">
    <property type="term" value="C:motile cilium"/>
    <property type="evidence" value="ECO:0007669"/>
    <property type="project" value="Ensembl"/>
</dbReference>
<dbReference type="GO" id="GO:0097730">
    <property type="term" value="C:non-motile cilium"/>
    <property type="evidence" value="ECO:0000314"/>
    <property type="project" value="GO_Central"/>
</dbReference>
<dbReference type="GO" id="GO:0016604">
    <property type="term" value="C:nuclear body"/>
    <property type="evidence" value="ECO:0000314"/>
    <property type="project" value="HPA"/>
</dbReference>
<dbReference type="GO" id="GO:0000922">
    <property type="term" value="C:spindle pole"/>
    <property type="evidence" value="ECO:0000314"/>
    <property type="project" value="UniProtKB"/>
</dbReference>
<dbReference type="GO" id="GO:0045202">
    <property type="term" value="C:synapse"/>
    <property type="evidence" value="ECO:0007669"/>
    <property type="project" value="GOC"/>
</dbReference>
<dbReference type="GO" id="GO:0007268">
    <property type="term" value="P:chemical synaptic transmission"/>
    <property type="evidence" value="ECO:0007669"/>
    <property type="project" value="InterPro"/>
</dbReference>
<dbReference type="GO" id="GO:0060271">
    <property type="term" value="P:cilium assembly"/>
    <property type="evidence" value="ECO:0000315"/>
    <property type="project" value="UniProtKB"/>
</dbReference>
<dbReference type="GO" id="GO:0033617">
    <property type="term" value="P:mitochondrial cytochrome c oxidase assembly"/>
    <property type="evidence" value="ECO:0000315"/>
    <property type="project" value="FlyBase"/>
</dbReference>
<dbReference type="GO" id="GO:0007005">
    <property type="term" value="P:mitochondrion organization"/>
    <property type="evidence" value="ECO:0000318"/>
    <property type="project" value="GO_Central"/>
</dbReference>
<dbReference type="GO" id="GO:1905515">
    <property type="term" value="P:non-motile cilium assembly"/>
    <property type="evidence" value="ECO:0000315"/>
    <property type="project" value="GO_Central"/>
</dbReference>
<dbReference type="InterPro" id="IPR033545">
    <property type="entry name" value="CEP89"/>
</dbReference>
<dbReference type="PANTHER" id="PTHR36170">
    <property type="entry name" value="CENTROSOMAL PROTEIN OF 89 KDA"/>
    <property type="match status" value="1"/>
</dbReference>
<dbReference type="PANTHER" id="PTHR36170:SF1">
    <property type="entry name" value="CENTROSOMAL PROTEIN OF 89 KDA"/>
    <property type="match status" value="1"/>
</dbReference>
<proteinExistence type="evidence at protein level"/>
<comment type="function">
    <text evidence="6 7">Required for ciliogenesis. Also plays a role in mitochondrial metabolism where it may modulate complex IV activity.</text>
</comment>
<comment type="interaction">
    <interactant intactId="EBI-11144046">
        <id>Q96ST8-3</id>
    </interactant>
    <interactant intactId="EBI-746987">
        <id>P62166</id>
        <label>NCS1</label>
    </interactant>
    <organismsDiffer>false</organismsDiffer>
    <experiments>4</experiments>
</comment>
<comment type="interaction">
    <interactant intactId="EBI-11144046">
        <id>Q96ST8-3</id>
    </interactant>
    <interactant intactId="EBI-79165">
        <id>Q9NRD5</id>
        <label>PICK1</label>
    </interactant>
    <organismsDiffer>false</organismsDiffer>
    <experiments>3</experiments>
</comment>
<comment type="subcellular location">
    <subcellularLocation>
        <location>Cytoplasm</location>
        <location>Cytosol</location>
    </subcellularLocation>
    <subcellularLocation>
        <location evidence="3">Cytoplasm</location>
        <location evidence="3">Cytoskeleton</location>
        <location evidence="3">Microtubule organizing center</location>
        <location evidence="3">Centrosome</location>
    </subcellularLocation>
    <subcellularLocation>
        <location>Cytoplasm</location>
        <location>Cytoskeleton</location>
        <location>Spindle pole</location>
    </subcellularLocation>
    <subcellularLocation>
        <location>Cytoplasm</location>
        <location>Cytoskeleton</location>
        <location>Microtubule organizing center</location>
        <location>Centrosome</location>
        <location>Centriole</location>
    </subcellularLocation>
    <subcellularLocation>
        <location>Mitochondrion intermembrane space</location>
    </subcellularLocation>
    <text>Localizes to the distal appendage region of the centriole, which anchors the mother centriole to the plasma membrane.</text>
</comment>
<comment type="alternative products">
    <event type="alternative splicing"/>
    <isoform>
        <id>Q96ST8-1</id>
        <name>1</name>
        <sequence type="displayed"/>
    </isoform>
    <isoform>
        <id>Q96ST8-2</id>
        <name>2</name>
        <sequence type="described" ref="VSP_039181"/>
    </isoform>
    <isoform>
        <id>Q96ST8-3</id>
        <name>3</name>
        <sequence type="described" ref="VSP_039182 VSP_039183"/>
    </isoform>
</comment>
<comment type="disease">
    <text evidence="7">Homozygous deletion comprising CEP89 and SLC7A9 genes has been reported in a patient with isolated complex IV deficiency, intellectual disability and multisystemic problems that include cystinuria, cataract, broad based walking pattern and deafness.</text>
</comment>
<gene>
    <name type="primary">CEP89</name>
    <name type="synonym">CCDC123</name>
</gene>
<sequence>MLLGFRRGRRSHFKHIIHGLLPAASVAPKAAVPRTPPPRSPNPSPERPRSALAAAILATTLTGRTVAIPQPRQRSRSESDVSSVEQDSFIEPYATTSQLRPRPNWQSEMGRRSSLPSFETLDYGDEEDIETQLSSSGKELGDVSAREDRGGHSDDLYAVPHRNQVPLLHEVNSEDDENISHQDGFPGSPPAPQRTQQKDGKHPVLNLKDEKPPLCEKPPPSPDITGRARQRYTEITREKFEALKEENMDLNNMNQSLTLELNTMKQAMKELQLKLKGMEKEKRKLKEAEKASSQEVAAPELLYLRKQAQELVDENDGLKMTVHRLNVELSRYQTKFRHLSKEESLNIEGLPSKGPIPPWLLDIKYLSPLLLAYEDMMKEKDELNATLKEEMRMFRMRVQEVVKENEELHQELNKSSAVTSEEWRQLQTQAKLVLEENKLLLEQLEIQQRKAKDSHQERLQEVSKLTKQLMLLEAKTHGQEKELAENREQLEILRAKCQELKTHSDGKIAVEVHKSIVNELKSQLQKEEEKERAEMEELMEKLTVLQAQKKSLLLEKNSLTEQNKALEAELERAQKINRKSQKKIEVLKKQVEKAMGNEMSAHQYLANLVGLAENITQERDSLMCLAKCLESEKDGVLNKVIKSNIRLGKLEEKVKGYKKQAALKLGDISHRLLEQQEDFAGKTAQYRQEMRHLHQVLKDKQEVLDQALQQNREMEGELEVIWESTFRENRRIRELLQDTLTRTGVQDNPRALVAPSLNGVSQADLLDGCDVCSYDLKSHAPTC</sequence>